<evidence type="ECO:0000255" key="1">
    <source>
        <dbReference type="HAMAP-Rule" id="MF_00720"/>
    </source>
</evidence>
<accession>B3GY58</accession>
<comment type="function">
    <text evidence="1">Involved in the restart of stalled replication forks, which reloads the replicative helicase on sites other than the origin of replication; the PriA-PriB pathway is the major replication restart pathway. During primosome assembly it facilitates complex formation between PriA and DnaT on DNA; stabilizes PriA on DNA. Stimulates the DNA unwinding activity of PriA helicase.</text>
</comment>
<comment type="subunit">
    <text evidence="1">Homodimer. Interacts with PriA and DnaT. Component of the replication restart primosome. Primosome assembly occurs via a 'hand-off' mechanism. PriA binds to replication forks, subsequently PriB then DnaT bind; DnaT then displaces ssDNA to generate the helicase loading substrate.</text>
</comment>
<comment type="similarity">
    <text evidence="1">Belongs to the PriB family.</text>
</comment>
<feature type="chain" id="PRO_1000132616" description="Replication restart protein PriB">
    <location>
        <begin position="1"/>
        <end position="124"/>
    </location>
</feature>
<feature type="domain" description="SSB" evidence="1">
    <location>
        <begin position="12"/>
        <end position="112"/>
    </location>
</feature>
<dbReference type="EMBL" id="CP001091">
    <property type="protein sequence ID" value="ACE61881.1"/>
    <property type="molecule type" value="Genomic_DNA"/>
</dbReference>
<dbReference type="RefSeq" id="WP_005598106.1">
    <property type="nucleotide sequence ID" value="NC_010939.1"/>
</dbReference>
<dbReference type="SMR" id="B3GY58"/>
<dbReference type="GeneID" id="48599407"/>
<dbReference type="KEGG" id="apa:APP7_1229"/>
<dbReference type="HOGENOM" id="CLU_166075_0_0_6"/>
<dbReference type="Proteomes" id="UP000001226">
    <property type="component" value="Chromosome"/>
</dbReference>
<dbReference type="GO" id="GO:1990077">
    <property type="term" value="C:primosome complex"/>
    <property type="evidence" value="ECO:0007669"/>
    <property type="project" value="UniProtKB-KW"/>
</dbReference>
<dbReference type="GO" id="GO:0003697">
    <property type="term" value="F:single-stranded DNA binding"/>
    <property type="evidence" value="ECO:0007669"/>
    <property type="project" value="UniProtKB-UniRule"/>
</dbReference>
<dbReference type="GO" id="GO:0006269">
    <property type="term" value="P:DNA replication, synthesis of primer"/>
    <property type="evidence" value="ECO:0007669"/>
    <property type="project" value="UniProtKB-KW"/>
</dbReference>
<dbReference type="Gene3D" id="2.40.50.140">
    <property type="entry name" value="Nucleic acid-binding proteins"/>
    <property type="match status" value="1"/>
</dbReference>
<dbReference type="HAMAP" id="MF_00720">
    <property type="entry name" value="PriB"/>
    <property type="match status" value="1"/>
</dbReference>
<dbReference type="InterPro" id="IPR012340">
    <property type="entry name" value="NA-bd_OB-fold"/>
</dbReference>
<dbReference type="InterPro" id="IPR000424">
    <property type="entry name" value="Primosome_PriB/ssb"/>
</dbReference>
<dbReference type="InterPro" id="IPR023646">
    <property type="entry name" value="Prisomal_replication_PriB"/>
</dbReference>
<dbReference type="NCBIfam" id="TIGR04418">
    <property type="entry name" value="PriB_gamma"/>
    <property type="match status" value="1"/>
</dbReference>
<dbReference type="Pfam" id="PF22657">
    <property type="entry name" value="SSB_1"/>
    <property type="match status" value="1"/>
</dbReference>
<dbReference type="PIRSF" id="PIRSF003135">
    <property type="entry name" value="Primosomal_n"/>
    <property type="match status" value="1"/>
</dbReference>
<dbReference type="SUPFAM" id="SSF50249">
    <property type="entry name" value="Nucleic acid-binding proteins"/>
    <property type="match status" value="1"/>
</dbReference>
<dbReference type="PROSITE" id="PS50935">
    <property type="entry name" value="SSB"/>
    <property type="match status" value="1"/>
</dbReference>
<name>PRIB_ACTP7</name>
<sequence length="124" mass="14131">MNQRKLASNSPIDNCLILSGSVASTVKQSQNPLGVPNYRFWLEHRSIQTEVNLERQAWCKIQVILNGNQFSLITQQIKLGDKIRVYGFIHTHKDYNGLSQLVVHAEHIEFIDQEKPNGTLFPSS</sequence>
<protein>
    <recommendedName>
        <fullName evidence="1">Replication restart protein PriB</fullName>
    </recommendedName>
</protein>
<gene>
    <name evidence="1" type="primary">priB</name>
    <name type="ordered locus">APP7_1229</name>
</gene>
<keyword id="KW-0235">DNA replication</keyword>
<keyword id="KW-0238">DNA-binding</keyword>
<keyword id="KW-0639">Primosome</keyword>
<reference key="1">
    <citation type="submission" date="2008-06" db="EMBL/GenBank/DDBJ databases">
        <title>Genome and proteome analysis of A. pleuropneumoniae serotype 7.</title>
        <authorList>
            <person name="Linke B."/>
            <person name="Buettner F."/>
            <person name="Martinez-Arias R."/>
            <person name="Goesmann A."/>
            <person name="Baltes N."/>
            <person name="Tegetmeyer H."/>
            <person name="Singh M."/>
            <person name="Gerlach G.F."/>
        </authorList>
    </citation>
    <scope>NUCLEOTIDE SEQUENCE [LARGE SCALE GENOMIC DNA]</scope>
    <source>
        <strain>AP76</strain>
    </source>
</reference>
<proteinExistence type="inferred from homology"/>
<organism>
    <name type="scientific">Actinobacillus pleuropneumoniae serotype 7 (strain AP76)</name>
    <dbReference type="NCBI Taxonomy" id="537457"/>
    <lineage>
        <taxon>Bacteria</taxon>
        <taxon>Pseudomonadati</taxon>
        <taxon>Pseudomonadota</taxon>
        <taxon>Gammaproteobacteria</taxon>
        <taxon>Pasteurellales</taxon>
        <taxon>Pasteurellaceae</taxon>
        <taxon>Actinobacillus</taxon>
    </lineage>
</organism>